<dbReference type="EMBL" id="U11581">
    <property type="protein sequence ID" value="AAB69746.1"/>
    <property type="molecule type" value="Genomic_DNA"/>
</dbReference>
<dbReference type="EMBL" id="AY558102">
    <property type="protein sequence ID" value="AAS56428.1"/>
    <property type="molecule type" value="Genomic_DNA"/>
</dbReference>
<dbReference type="EMBL" id="BK006934">
    <property type="protein sequence ID" value="DAA06680.1"/>
    <property type="molecule type" value="Genomic_DNA"/>
</dbReference>
<dbReference type="PIR" id="S46820">
    <property type="entry name" value="S46820"/>
</dbReference>
<dbReference type="RefSeq" id="NP_011855.1">
    <property type="nucleotide sequence ID" value="NM_001179088.1"/>
</dbReference>
<dbReference type="SMR" id="P38750"/>
<dbReference type="BioGRID" id="36418">
    <property type="interactions" value="99"/>
</dbReference>
<dbReference type="DIP" id="DIP-2601N"/>
<dbReference type="FunCoup" id="P38750">
    <property type="interactions" value="38"/>
</dbReference>
<dbReference type="IntAct" id="P38750">
    <property type="interactions" value="3"/>
</dbReference>
<dbReference type="MINT" id="P38750"/>
<dbReference type="STRING" id="4932.YHL008C"/>
<dbReference type="iPTMnet" id="P38750"/>
<dbReference type="PaxDb" id="4932-YHL008C"/>
<dbReference type="PeptideAtlas" id="P38750"/>
<dbReference type="EnsemblFungi" id="YHL008C_mRNA">
    <property type="protein sequence ID" value="YHL008C"/>
    <property type="gene ID" value="YHL008C"/>
</dbReference>
<dbReference type="GeneID" id="856381"/>
<dbReference type="KEGG" id="sce:YHL008C"/>
<dbReference type="AGR" id="SGD:S000001000"/>
<dbReference type="SGD" id="S000001000">
    <property type="gene designation" value="YHL008C"/>
</dbReference>
<dbReference type="VEuPathDB" id="FungiDB:YHL008C"/>
<dbReference type="eggNOG" id="ENOG502QUGF">
    <property type="taxonomic scope" value="Eukaryota"/>
</dbReference>
<dbReference type="HOGENOM" id="CLU_020549_0_0_1"/>
<dbReference type="InParanoid" id="P38750"/>
<dbReference type="OMA" id="RNPGIVN"/>
<dbReference type="OrthoDB" id="4829at2759"/>
<dbReference type="BioCyc" id="YEAST:G3O-31030-MONOMER"/>
<dbReference type="BioGRID-ORCS" id="856381">
    <property type="hits" value="4 hits in 10 CRISPR screens"/>
</dbReference>
<dbReference type="PRO" id="PR:P38750"/>
<dbReference type="Proteomes" id="UP000002311">
    <property type="component" value="Chromosome VIII"/>
</dbReference>
<dbReference type="RNAct" id="P38750">
    <property type="molecule type" value="protein"/>
</dbReference>
<dbReference type="GO" id="GO:0000324">
    <property type="term" value="C:fungal-type vacuole"/>
    <property type="evidence" value="ECO:0007005"/>
    <property type="project" value="SGD"/>
</dbReference>
<dbReference type="GO" id="GO:0005886">
    <property type="term" value="C:plasma membrane"/>
    <property type="evidence" value="ECO:0000318"/>
    <property type="project" value="GO_Central"/>
</dbReference>
<dbReference type="GO" id="GO:0015513">
    <property type="term" value="F:high-affinity secondary active nitrite transmembrane transporter activity"/>
    <property type="evidence" value="ECO:0000318"/>
    <property type="project" value="GO_Central"/>
</dbReference>
<dbReference type="GO" id="GO:0140299">
    <property type="term" value="F:molecular sensor activity"/>
    <property type="evidence" value="ECO:0000315"/>
    <property type="project" value="SGD"/>
</dbReference>
<dbReference type="GO" id="GO:0006821">
    <property type="term" value="P:chloride transport"/>
    <property type="evidence" value="ECO:0000315"/>
    <property type="project" value="SGD"/>
</dbReference>
<dbReference type="GO" id="GO:0015707">
    <property type="term" value="P:nitrite transport"/>
    <property type="evidence" value="ECO:0000318"/>
    <property type="project" value="GO_Central"/>
</dbReference>
<dbReference type="GO" id="GO:2001225">
    <property type="term" value="P:regulation of chloride transport"/>
    <property type="evidence" value="ECO:0000315"/>
    <property type="project" value="SGD"/>
</dbReference>
<dbReference type="FunFam" id="1.20.1080.10:FF:000011">
    <property type="entry name" value="Formate family transporter"/>
    <property type="match status" value="1"/>
</dbReference>
<dbReference type="Gene3D" id="1.20.1080.10">
    <property type="entry name" value="Glycerol uptake facilitator protein"/>
    <property type="match status" value="1"/>
</dbReference>
<dbReference type="InterPro" id="IPR023271">
    <property type="entry name" value="Aquaporin-like"/>
</dbReference>
<dbReference type="InterPro" id="IPR000292">
    <property type="entry name" value="For/NO2_transpt"/>
</dbReference>
<dbReference type="InterPro" id="IPR024002">
    <property type="entry name" value="For/NO2_transpt_CS"/>
</dbReference>
<dbReference type="NCBIfam" id="TIGR00790">
    <property type="entry name" value="fnt"/>
    <property type="match status" value="1"/>
</dbReference>
<dbReference type="PANTHER" id="PTHR30520">
    <property type="entry name" value="FORMATE TRANSPORTER-RELATED"/>
    <property type="match status" value="1"/>
</dbReference>
<dbReference type="PANTHER" id="PTHR30520:SF6">
    <property type="entry name" value="FORMATE_NITRATE FAMILY TRANSPORTER (EUROFUNG)"/>
    <property type="match status" value="1"/>
</dbReference>
<dbReference type="Pfam" id="PF01226">
    <property type="entry name" value="Form_Nir_trans"/>
    <property type="match status" value="1"/>
</dbReference>
<dbReference type="PROSITE" id="PS01005">
    <property type="entry name" value="FORMATE_NITRITE_TP_1"/>
    <property type="match status" value="1"/>
</dbReference>
<dbReference type="PROSITE" id="PS01006">
    <property type="entry name" value="FORMATE_NITRITE_TP_2"/>
    <property type="match status" value="1"/>
</dbReference>
<gene>
    <name type="ordered locus">YHL008C</name>
</gene>
<proteinExistence type="evidence at protein level"/>
<name>YHA8_YEAST</name>
<comment type="subcellular location">
    <subcellularLocation>
        <location evidence="3">Membrane</location>
        <topology evidence="3">Multi-pass membrane protein</topology>
    </subcellularLocation>
</comment>
<comment type="similarity">
    <text evidence="3">Belongs to the FNT transporter (TC 1.A.16) family.</text>
</comment>
<evidence type="ECO:0000255" key="1"/>
<evidence type="ECO:0000256" key="2">
    <source>
        <dbReference type="SAM" id="MobiDB-lite"/>
    </source>
</evidence>
<evidence type="ECO:0000305" key="3"/>
<evidence type="ECO:0007744" key="4">
    <source>
    </source>
</evidence>
<reference key="1">
    <citation type="journal article" date="1994" name="Science">
        <title>Complete nucleotide sequence of Saccharomyces cerevisiae chromosome VIII.</title>
        <authorList>
            <person name="Johnston M."/>
            <person name="Andrews S."/>
            <person name="Brinkman R."/>
            <person name="Cooper J."/>
            <person name="Ding H."/>
            <person name="Dover J."/>
            <person name="Du Z."/>
            <person name="Favello A."/>
            <person name="Fulton L."/>
            <person name="Gattung S."/>
            <person name="Geisel C."/>
            <person name="Kirsten J."/>
            <person name="Kucaba T."/>
            <person name="Hillier L.W."/>
            <person name="Jier M."/>
            <person name="Johnston L."/>
            <person name="Langston Y."/>
            <person name="Latreille P."/>
            <person name="Louis E.J."/>
            <person name="Macri C."/>
            <person name="Mardis E."/>
            <person name="Menezes S."/>
            <person name="Mouser L."/>
            <person name="Nhan M."/>
            <person name="Rifkin L."/>
            <person name="Riles L."/>
            <person name="St Peter H."/>
            <person name="Trevaskis E."/>
            <person name="Vaughan K."/>
            <person name="Vignati D."/>
            <person name="Wilcox L."/>
            <person name="Wohldman P."/>
            <person name="Waterston R."/>
            <person name="Wilson R."/>
            <person name="Vaudin M."/>
        </authorList>
    </citation>
    <scope>NUCLEOTIDE SEQUENCE [LARGE SCALE GENOMIC DNA]</scope>
    <source>
        <strain>ATCC 204508 / S288c</strain>
    </source>
</reference>
<reference key="2">
    <citation type="journal article" date="2014" name="G3 (Bethesda)">
        <title>The reference genome sequence of Saccharomyces cerevisiae: Then and now.</title>
        <authorList>
            <person name="Engel S.R."/>
            <person name="Dietrich F.S."/>
            <person name="Fisk D.G."/>
            <person name="Binkley G."/>
            <person name="Balakrishnan R."/>
            <person name="Costanzo M.C."/>
            <person name="Dwight S.S."/>
            <person name="Hitz B.C."/>
            <person name="Karra K."/>
            <person name="Nash R.S."/>
            <person name="Weng S."/>
            <person name="Wong E.D."/>
            <person name="Lloyd P."/>
            <person name="Skrzypek M.S."/>
            <person name="Miyasato S.R."/>
            <person name="Simison M."/>
            <person name="Cherry J.M."/>
        </authorList>
    </citation>
    <scope>GENOME REANNOTATION</scope>
    <source>
        <strain>ATCC 204508 / S288c</strain>
    </source>
</reference>
<reference key="3">
    <citation type="journal article" date="2007" name="Genome Res.">
        <title>Approaching a complete repository of sequence-verified protein-encoding clones for Saccharomyces cerevisiae.</title>
        <authorList>
            <person name="Hu Y."/>
            <person name="Rolfs A."/>
            <person name="Bhullar B."/>
            <person name="Murthy T.V.S."/>
            <person name="Zhu C."/>
            <person name="Berger M.F."/>
            <person name="Camargo A.A."/>
            <person name="Kelley F."/>
            <person name="McCarron S."/>
            <person name="Jepson D."/>
            <person name="Richardson A."/>
            <person name="Raphael J."/>
            <person name="Moreira D."/>
            <person name="Taycher E."/>
            <person name="Zuo D."/>
            <person name="Mohr S."/>
            <person name="Kane M.F."/>
            <person name="Williamson J."/>
            <person name="Simpson A.J.G."/>
            <person name="Bulyk M.L."/>
            <person name="Harlow E."/>
            <person name="Marsischky G."/>
            <person name="Kolodner R.D."/>
            <person name="LaBaer J."/>
        </authorList>
    </citation>
    <scope>NUCLEOTIDE SEQUENCE [GENOMIC DNA]</scope>
    <source>
        <strain>ATCC 204508 / S288c</strain>
    </source>
</reference>
<reference key="4">
    <citation type="journal article" date="2006" name="Proc. Natl. Acad. Sci. U.S.A.">
        <title>A global topology map of the Saccharomyces cerevisiae membrane proteome.</title>
        <authorList>
            <person name="Kim H."/>
            <person name="Melen K."/>
            <person name="Oesterberg M."/>
            <person name="von Heijne G."/>
        </authorList>
    </citation>
    <scope>TOPOLOGY [LARGE SCALE ANALYSIS]</scope>
    <source>
        <strain>ATCC 208353 / W303-1A</strain>
    </source>
</reference>
<reference key="5">
    <citation type="journal article" date="2009" name="Science">
        <title>Global analysis of Cdk1 substrate phosphorylation sites provides insights into evolution.</title>
        <authorList>
            <person name="Holt L.J."/>
            <person name="Tuch B.B."/>
            <person name="Villen J."/>
            <person name="Johnson A.D."/>
            <person name="Gygi S.P."/>
            <person name="Morgan D.O."/>
        </authorList>
    </citation>
    <scope>PHOSPHORYLATION [LARGE SCALE ANALYSIS] AT THR-305; SER-546 AND THR-588</scope>
    <scope>IDENTIFICATION BY MASS SPECTROMETRY [LARGE SCALE ANALYSIS]</scope>
</reference>
<feature type="chain" id="PRO_0000094729" description="Uncharacterized transporter YHL008C">
    <location>
        <begin position="1"/>
        <end position="627"/>
    </location>
</feature>
<feature type="topological domain" description="Extracellular" evidence="1">
    <location>
        <begin position="1"/>
        <end position="32"/>
    </location>
</feature>
<feature type="transmembrane region" description="Helical" evidence="1">
    <location>
        <begin position="33"/>
        <end position="53"/>
    </location>
</feature>
<feature type="topological domain" description="Cytoplasmic" evidence="1">
    <location>
        <begin position="54"/>
        <end position="66"/>
    </location>
</feature>
<feature type="transmembrane region" description="Helical" evidence="1">
    <location>
        <begin position="67"/>
        <end position="87"/>
    </location>
</feature>
<feature type="topological domain" description="Extracellular" evidence="1">
    <location>
        <begin position="88"/>
        <end position="113"/>
    </location>
</feature>
<feature type="transmembrane region" description="Helical" evidence="1">
    <location>
        <begin position="114"/>
        <end position="134"/>
    </location>
</feature>
<feature type="topological domain" description="Cytoplasmic" evidence="1">
    <location>
        <begin position="135"/>
        <end position="165"/>
    </location>
</feature>
<feature type="transmembrane region" description="Helical" evidence="1">
    <location>
        <begin position="166"/>
        <end position="186"/>
    </location>
</feature>
<feature type="topological domain" description="Extracellular" evidence="1">
    <location>
        <begin position="187"/>
        <end position="192"/>
    </location>
</feature>
<feature type="transmembrane region" description="Helical" evidence="1">
    <location>
        <begin position="193"/>
        <end position="213"/>
    </location>
</feature>
<feature type="topological domain" description="Cytoplasmic" evidence="1">
    <location>
        <begin position="214"/>
        <end position="218"/>
    </location>
</feature>
<feature type="transmembrane region" description="Helical" evidence="1">
    <location>
        <begin position="219"/>
        <end position="239"/>
    </location>
</feature>
<feature type="topological domain" description="Extracellular" evidence="1">
    <location>
        <begin position="240"/>
        <end position="245"/>
    </location>
</feature>
<feature type="transmembrane region" description="Helical" evidence="1">
    <location>
        <begin position="246"/>
        <end position="266"/>
    </location>
</feature>
<feature type="topological domain" description="Cytoplasmic" evidence="1">
    <location>
        <begin position="267"/>
        <end position="627"/>
    </location>
</feature>
<feature type="region of interest" description="Disordered" evidence="2">
    <location>
        <begin position="512"/>
        <end position="537"/>
    </location>
</feature>
<feature type="region of interest" description="Disordered" evidence="2">
    <location>
        <begin position="605"/>
        <end position="627"/>
    </location>
</feature>
<feature type="compositionally biased region" description="Polar residues" evidence="2">
    <location>
        <begin position="517"/>
        <end position="533"/>
    </location>
</feature>
<feature type="compositionally biased region" description="Basic and acidic residues" evidence="2">
    <location>
        <begin position="605"/>
        <end position="614"/>
    </location>
</feature>
<feature type="modified residue" description="Phosphothreonine" evidence="4">
    <location>
        <position position="305"/>
    </location>
</feature>
<feature type="modified residue" description="Phosphoserine" evidence="4">
    <location>
        <position position="546"/>
    </location>
</feature>
<feature type="modified residue" description="Phosphothreonine" evidence="4">
    <location>
        <position position="588"/>
    </location>
</feature>
<keyword id="KW-0472">Membrane</keyword>
<keyword id="KW-0597">Phosphoprotein</keyword>
<keyword id="KW-1185">Reference proteome</keyword>
<keyword id="KW-0812">Transmembrane</keyword>
<keyword id="KW-1133">Transmembrane helix</keyword>
<keyword id="KW-0813">Transport</keyword>
<accession>P38750</accession>
<accession>D3DKQ7</accession>
<sequence length="627" mass="69969">MVDDSNYLTPHETALAVVATAMKKARLQLDTLLINSILGGVLFSSGSFLLVAVYSEDPDIVARNPGIVNLITGVNFAMGLFYVVMMGADLFNSNILFFSVGVLRKAVTIYDLMISWVVSWLGNIAGSLFVSYLFGHLSGISSQKLWIIGSRQIIEQKVSYSFVQTFLKGIACNFFVCLAIYLQLMAKPIHVKFILMSFPIIDFIGIGFTHVVGDMSASFIAMLNGANVSVGKYIWKLLIPASLGNIVGGLFFSAVVPFYLHLVVVERDRKRLSLPEYEARDEQPELNMDSRVVRIQKNECDDDATETGEDLENLTEKGFASIYNTNHDNSSYFTGRSLNSLRSIPSSVITSDNVTMESDLGEPVQFIPKSNSTTRSPHLGLPHNLPHNHSIKSINRHRINKRHSLRSPPGVFPVRGMGEPLEREKTIEDATYDPKENELFLRRAETHNSAYVKNKKKEDDNLLRLVKTEEDREQKEYEKNGGYNILENKPGTRLEKIITHLAENVSSREVTPPILPRTTQDTFPHNAPASSPAYTDDAHSLRKANSTTLGGLFRAVSKEFHSSKDAESPDDLLKKMAAVGINRNARITANNVAGIVNLNKEDLDSTTRRQKITEPKNFYNRHTSPQL</sequence>
<protein>
    <recommendedName>
        <fullName>Uncharacterized transporter YHL008C</fullName>
    </recommendedName>
</protein>
<organism>
    <name type="scientific">Saccharomyces cerevisiae (strain ATCC 204508 / S288c)</name>
    <name type="common">Baker's yeast</name>
    <dbReference type="NCBI Taxonomy" id="559292"/>
    <lineage>
        <taxon>Eukaryota</taxon>
        <taxon>Fungi</taxon>
        <taxon>Dikarya</taxon>
        <taxon>Ascomycota</taxon>
        <taxon>Saccharomycotina</taxon>
        <taxon>Saccharomycetes</taxon>
        <taxon>Saccharomycetales</taxon>
        <taxon>Saccharomycetaceae</taxon>
        <taxon>Saccharomyces</taxon>
    </lineage>
</organism>